<name>RS20_ECOLC</name>
<keyword id="KW-0687">Ribonucleoprotein</keyword>
<keyword id="KW-0689">Ribosomal protein</keyword>
<keyword id="KW-0694">RNA-binding</keyword>
<keyword id="KW-0699">rRNA-binding</keyword>
<comment type="function">
    <text evidence="1">Binds directly to 16S ribosomal RNA.</text>
</comment>
<comment type="similarity">
    <text evidence="1">Belongs to the bacterial ribosomal protein bS20 family.</text>
</comment>
<feature type="chain" id="PRO_1000081428" description="Small ribosomal subunit protein bS20">
    <location>
        <begin position="1"/>
        <end position="87"/>
    </location>
</feature>
<feature type="region of interest" description="Disordered" evidence="2">
    <location>
        <begin position="1"/>
        <end position="26"/>
    </location>
</feature>
<protein>
    <recommendedName>
        <fullName evidence="1">Small ribosomal subunit protein bS20</fullName>
    </recommendedName>
    <alternativeName>
        <fullName evidence="3">30S ribosomal protein S20</fullName>
    </alternativeName>
</protein>
<reference key="1">
    <citation type="submission" date="2008-02" db="EMBL/GenBank/DDBJ databases">
        <title>Complete sequence of Escherichia coli C str. ATCC 8739.</title>
        <authorList>
            <person name="Copeland A."/>
            <person name="Lucas S."/>
            <person name="Lapidus A."/>
            <person name="Glavina del Rio T."/>
            <person name="Dalin E."/>
            <person name="Tice H."/>
            <person name="Bruce D."/>
            <person name="Goodwin L."/>
            <person name="Pitluck S."/>
            <person name="Kiss H."/>
            <person name="Brettin T."/>
            <person name="Detter J.C."/>
            <person name="Han C."/>
            <person name="Kuske C.R."/>
            <person name="Schmutz J."/>
            <person name="Larimer F."/>
            <person name="Land M."/>
            <person name="Hauser L."/>
            <person name="Kyrpides N."/>
            <person name="Mikhailova N."/>
            <person name="Ingram L."/>
            <person name="Richardson P."/>
        </authorList>
    </citation>
    <scope>NUCLEOTIDE SEQUENCE [LARGE SCALE GENOMIC DNA]</scope>
    <source>
        <strain>ATCC 8739 / DSM 1576 / NBRC 3972 / NCIMB 8545 / WDCM 00012 / Crooks</strain>
    </source>
</reference>
<dbReference type="EMBL" id="CP000946">
    <property type="protein sequence ID" value="ACA79244.1"/>
    <property type="molecule type" value="Genomic_DNA"/>
</dbReference>
<dbReference type="RefSeq" id="WP_001274021.1">
    <property type="nucleotide sequence ID" value="NZ_MTFT01000035.1"/>
</dbReference>
<dbReference type="SMR" id="B1IRF1"/>
<dbReference type="GeneID" id="93777413"/>
<dbReference type="KEGG" id="ecl:EcolC_3631"/>
<dbReference type="HOGENOM" id="CLU_160655_4_0_6"/>
<dbReference type="GO" id="GO:0005829">
    <property type="term" value="C:cytosol"/>
    <property type="evidence" value="ECO:0007669"/>
    <property type="project" value="TreeGrafter"/>
</dbReference>
<dbReference type="GO" id="GO:0015935">
    <property type="term" value="C:small ribosomal subunit"/>
    <property type="evidence" value="ECO:0007669"/>
    <property type="project" value="TreeGrafter"/>
</dbReference>
<dbReference type="GO" id="GO:0070181">
    <property type="term" value="F:small ribosomal subunit rRNA binding"/>
    <property type="evidence" value="ECO:0007669"/>
    <property type="project" value="TreeGrafter"/>
</dbReference>
<dbReference type="GO" id="GO:0003735">
    <property type="term" value="F:structural constituent of ribosome"/>
    <property type="evidence" value="ECO:0007669"/>
    <property type="project" value="InterPro"/>
</dbReference>
<dbReference type="GO" id="GO:0006412">
    <property type="term" value="P:translation"/>
    <property type="evidence" value="ECO:0007669"/>
    <property type="project" value="UniProtKB-UniRule"/>
</dbReference>
<dbReference type="FunFam" id="1.20.58.110:FF:000001">
    <property type="entry name" value="30S ribosomal protein S20"/>
    <property type="match status" value="1"/>
</dbReference>
<dbReference type="Gene3D" id="1.20.58.110">
    <property type="entry name" value="Ribosomal protein S20"/>
    <property type="match status" value="1"/>
</dbReference>
<dbReference type="HAMAP" id="MF_00500">
    <property type="entry name" value="Ribosomal_bS20"/>
    <property type="match status" value="1"/>
</dbReference>
<dbReference type="InterPro" id="IPR002583">
    <property type="entry name" value="Ribosomal_bS20"/>
</dbReference>
<dbReference type="InterPro" id="IPR036510">
    <property type="entry name" value="Ribosomal_bS20_sf"/>
</dbReference>
<dbReference type="NCBIfam" id="TIGR00029">
    <property type="entry name" value="S20"/>
    <property type="match status" value="1"/>
</dbReference>
<dbReference type="PANTHER" id="PTHR33398">
    <property type="entry name" value="30S RIBOSOMAL PROTEIN S20"/>
    <property type="match status" value="1"/>
</dbReference>
<dbReference type="PANTHER" id="PTHR33398:SF1">
    <property type="entry name" value="SMALL RIBOSOMAL SUBUNIT PROTEIN BS20C"/>
    <property type="match status" value="1"/>
</dbReference>
<dbReference type="Pfam" id="PF01649">
    <property type="entry name" value="Ribosomal_S20p"/>
    <property type="match status" value="1"/>
</dbReference>
<dbReference type="SUPFAM" id="SSF46992">
    <property type="entry name" value="Ribosomal protein S20"/>
    <property type="match status" value="1"/>
</dbReference>
<evidence type="ECO:0000255" key="1">
    <source>
        <dbReference type="HAMAP-Rule" id="MF_00500"/>
    </source>
</evidence>
<evidence type="ECO:0000256" key="2">
    <source>
        <dbReference type="SAM" id="MobiDB-lite"/>
    </source>
</evidence>
<evidence type="ECO:0000305" key="3"/>
<accession>B1IRF1</accession>
<proteinExistence type="inferred from homology"/>
<gene>
    <name evidence="1" type="primary">rpsT</name>
    <name type="ordered locus">EcolC_3631</name>
</gene>
<sequence>MANIKSAKKRAIQSEKARKHNASRRSMMRTFIKKVYAAIEAGDKAAAQKAFNEMQPIVDRQAAKGLIHKNKAARHKANLTAQINKLA</sequence>
<organism>
    <name type="scientific">Escherichia coli (strain ATCC 8739 / DSM 1576 / NBRC 3972 / NCIMB 8545 / WDCM 00012 / Crooks)</name>
    <dbReference type="NCBI Taxonomy" id="481805"/>
    <lineage>
        <taxon>Bacteria</taxon>
        <taxon>Pseudomonadati</taxon>
        <taxon>Pseudomonadota</taxon>
        <taxon>Gammaproteobacteria</taxon>
        <taxon>Enterobacterales</taxon>
        <taxon>Enterobacteriaceae</taxon>
        <taxon>Escherichia</taxon>
    </lineage>
</organism>